<name>RAP1A_MOUSE</name>
<keyword id="KW-0965">Cell junction</keyword>
<keyword id="KW-1003">Cell membrane</keyword>
<keyword id="KW-0963">Cytoplasm</keyword>
<keyword id="KW-0967">Endosome</keyword>
<keyword id="KW-0342">GTP-binding</keyword>
<keyword id="KW-0378">Hydrolase</keyword>
<keyword id="KW-0449">Lipoprotein</keyword>
<keyword id="KW-0472">Membrane</keyword>
<keyword id="KW-0488">Methylation</keyword>
<keyword id="KW-0524">Neurogenesis</keyword>
<keyword id="KW-0547">Nucleotide-binding</keyword>
<keyword id="KW-0636">Prenylation</keyword>
<keyword id="KW-1185">Reference proteome</keyword>
<keyword id="KW-0043">Tumor suppressor</keyword>
<feature type="chain" id="PRO_0000030201" description="Ras-related protein Rap-1A">
    <location>
        <begin position="1"/>
        <end position="181"/>
    </location>
</feature>
<feature type="propeptide" id="PRO_0000030202" description="Removed in mature form" evidence="1">
    <location>
        <begin position="182"/>
        <end position="184"/>
    </location>
</feature>
<feature type="short sequence motif" description="Effector region" evidence="6">
    <location>
        <begin position="32"/>
        <end position="40"/>
    </location>
</feature>
<feature type="binding site" evidence="3">
    <location>
        <begin position="10"/>
        <end position="18"/>
    </location>
    <ligand>
        <name>GTP</name>
        <dbReference type="ChEBI" id="CHEBI:37565"/>
    </ligand>
</feature>
<feature type="binding site" evidence="3">
    <location>
        <begin position="29"/>
        <end position="35"/>
    </location>
    <ligand>
        <name>GTP</name>
        <dbReference type="ChEBI" id="CHEBI:37565"/>
    </ligand>
</feature>
<feature type="binding site" evidence="3">
    <location>
        <position position="60"/>
    </location>
    <ligand>
        <name>GTP</name>
        <dbReference type="ChEBI" id="CHEBI:37565"/>
    </ligand>
</feature>
<feature type="binding site" evidence="3">
    <location>
        <begin position="116"/>
        <end position="119"/>
    </location>
    <ligand>
        <name>GTP</name>
        <dbReference type="ChEBI" id="CHEBI:37565"/>
    </ligand>
</feature>
<feature type="modified residue" description="Cysteine methyl ester" evidence="3">
    <location>
        <position position="181"/>
    </location>
</feature>
<feature type="lipid moiety-binding region" description="S-geranylgeranyl cysteine" evidence="3">
    <location>
        <position position="181"/>
    </location>
</feature>
<proteinExistence type="evidence at protein level"/>
<sequence length="184" mass="20987">MREYKLVVLGSGGVGKSALTVQFVQGIFVEKYDPTIEDSYRKQVEVDCQQCMLEILDTAGTEQFTAMRDLYMKNGQGFALVYSITAQSTFNDLQDLREQILRVKDTEDVPMILVGNKCDLEDERVVGKEQGQNLARQWCNCAFLESSAKSKINVNEIFYDLVRQINRKTPVEKKKPKKKSCLLL</sequence>
<organism>
    <name type="scientific">Mus musculus</name>
    <name type="common">Mouse</name>
    <dbReference type="NCBI Taxonomy" id="10090"/>
    <lineage>
        <taxon>Eukaryota</taxon>
        <taxon>Metazoa</taxon>
        <taxon>Chordata</taxon>
        <taxon>Craniata</taxon>
        <taxon>Vertebrata</taxon>
        <taxon>Euteleostomi</taxon>
        <taxon>Mammalia</taxon>
        <taxon>Eutheria</taxon>
        <taxon>Euarchontoglires</taxon>
        <taxon>Glires</taxon>
        <taxon>Rodentia</taxon>
        <taxon>Myomorpha</taxon>
        <taxon>Muroidea</taxon>
        <taxon>Muridae</taxon>
        <taxon>Murinae</taxon>
        <taxon>Mus</taxon>
        <taxon>Mus</taxon>
    </lineage>
</organism>
<evidence type="ECO:0000250" key="1"/>
<evidence type="ECO:0000250" key="2">
    <source>
        <dbReference type="UniProtKB" id="P61224"/>
    </source>
</evidence>
<evidence type="ECO:0000250" key="3">
    <source>
        <dbReference type="UniProtKB" id="P62834"/>
    </source>
</evidence>
<evidence type="ECO:0000269" key="4">
    <source>
    </source>
</evidence>
<evidence type="ECO:0000269" key="5">
    <source>
    </source>
</evidence>
<evidence type="ECO:0000305" key="6"/>
<accession>P62835</accession>
<accession>P10113</accession>
<dbReference type="EC" id="3.6.5.2" evidence="2"/>
<dbReference type="EMBL" id="BC051419">
    <property type="protein sequence ID" value="AAH51419.1"/>
    <property type="molecule type" value="mRNA"/>
</dbReference>
<dbReference type="EMBL" id="BC083128">
    <property type="protein sequence ID" value="AAH83128.1"/>
    <property type="molecule type" value="mRNA"/>
</dbReference>
<dbReference type="CCDS" id="CCDS17711.1"/>
<dbReference type="RefSeq" id="NP_663516.1">
    <property type="nucleotide sequence ID" value="NM_145541.5"/>
</dbReference>
<dbReference type="RefSeq" id="XP_006500970.1">
    <property type="nucleotide sequence ID" value="XM_006500907.5"/>
</dbReference>
<dbReference type="RefSeq" id="XP_030108244.1">
    <property type="nucleotide sequence ID" value="XM_030252384.2"/>
</dbReference>
<dbReference type="RefSeq" id="XP_030108245.1">
    <property type="nucleotide sequence ID" value="XM_030252385.2"/>
</dbReference>
<dbReference type="RefSeq" id="XP_030108246.1">
    <property type="nucleotide sequence ID" value="XM_030252386.2"/>
</dbReference>
<dbReference type="RefSeq" id="XP_036018749.1">
    <property type="nucleotide sequence ID" value="XM_036162856.1"/>
</dbReference>
<dbReference type="RefSeq" id="XP_036018750.1">
    <property type="nucleotide sequence ID" value="XM_036162857.1"/>
</dbReference>
<dbReference type="RefSeq" id="XP_036018751.1">
    <property type="nucleotide sequence ID" value="XM_036162858.1"/>
</dbReference>
<dbReference type="SMR" id="P62835"/>
<dbReference type="BioGRID" id="225141">
    <property type="interactions" value="16"/>
</dbReference>
<dbReference type="CORUM" id="P62835"/>
<dbReference type="FunCoup" id="P62835">
    <property type="interactions" value="2201"/>
</dbReference>
<dbReference type="IntAct" id="P62835">
    <property type="interactions" value="4"/>
</dbReference>
<dbReference type="STRING" id="10090.ENSMUSP00000088174"/>
<dbReference type="GlyGen" id="P62835">
    <property type="glycosylation" value="1 site, 1 O-linked glycan (1 site)"/>
</dbReference>
<dbReference type="iPTMnet" id="P62835"/>
<dbReference type="PhosphoSitePlus" id="P62835"/>
<dbReference type="SwissPalm" id="P62835"/>
<dbReference type="jPOST" id="P62835"/>
<dbReference type="PaxDb" id="10090-ENSMUSP00000088174"/>
<dbReference type="PeptideAtlas" id="P62835"/>
<dbReference type="ProteomicsDB" id="254898"/>
<dbReference type="Pumba" id="P62835"/>
<dbReference type="TopDownProteomics" id="P62835"/>
<dbReference type="Antibodypedia" id="4330">
    <property type="antibodies" value="461 antibodies from 36 providers"/>
</dbReference>
<dbReference type="DNASU" id="109905"/>
<dbReference type="Ensembl" id="ENSMUST00000090678.11">
    <property type="protein sequence ID" value="ENSMUSP00000088174.7"/>
    <property type="gene ID" value="ENSMUSG00000068798.11"/>
</dbReference>
<dbReference type="GeneID" id="109905"/>
<dbReference type="KEGG" id="mmu:109905"/>
<dbReference type="UCSC" id="uc008qve.2">
    <property type="organism name" value="mouse"/>
</dbReference>
<dbReference type="AGR" id="MGI:97852"/>
<dbReference type="CTD" id="5906"/>
<dbReference type="MGI" id="MGI:97852">
    <property type="gene designation" value="Rap1a"/>
</dbReference>
<dbReference type="VEuPathDB" id="HostDB:ENSMUSG00000068798"/>
<dbReference type="eggNOG" id="KOG0395">
    <property type="taxonomic scope" value="Eukaryota"/>
</dbReference>
<dbReference type="GeneTree" id="ENSGT00940000160251"/>
<dbReference type="InParanoid" id="P62835"/>
<dbReference type="OMA" id="EYKLVVM"/>
<dbReference type="OrthoDB" id="5976022at2759"/>
<dbReference type="PhylomeDB" id="P62835"/>
<dbReference type="TreeFam" id="TF313014"/>
<dbReference type="Reactome" id="R-MMU-170968">
    <property type="pathway name" value="Frs2-mediated activation"/>
</dbReference>
<dbReference type="Reactome" id="R-MMU-170984">
    <property type="pathway name" value="ARMS-mediated activation"/>
</dbReference>
<dbReference type="Reactome" id="R-MMU-354192">
    <property type="pathway name" value="Integrin signaling"/>
</dbReference>
<dbReference type="Reactome" id="R-MMU-354194">
    <property type="pathway name" value="GRB2:SOS provides linkage to MAPK signaling for Integrins"/>
</dbReference>
<dbReference type="Reactome" id="R-MMU-372708">
    <property type="pathway name" value="p130Cas linkage to MAPK signaling for integrins"/>
</dbReference>
<dbReference type="Reactome" id="R-MMU-381676">
    <property type="pathway name" value="Glucagon-like Peptide-1 (GLP1) regulates insulin secretion"/>
</dbReference>
<dbReference type="Reactome" id="R-MMU-392517">
    <property type="pathway name" value="Rap1 signalling"/>
</dbReference>
<dbReference type="Reactome" id="R-MMU-5674135">
    <property type="pathway name" value="MAP2K and MAPK activation"/>
</dbReference>
<dbReference type="Reactome" id="R-MMU-6798695">
    <property type="pathway name" value="Neutrophil degranulation"/>
</dbReference>
<dbReference type="Reactome" id="R-MMU-8875555">
    <property type="pathway name" value="MET activates RAP1 and RAC1"/>
</dbReference>
<dbReference type="BioGRID-ORCS" id="109905">
    <property type="hits" value="0 hits in 75 CRISPR screens"/>
</dbReference>
<dbReference type="CD-CODE" id="CE726F99">
    <property type="entry name" value="Postsynaptic density"/>
</dbReference>
<dbReference type="ChiTaRS" id="Rap1a">
    <property type="organism name" value="mouse"/>
</dbReference>
<dbReference type="PRO" id="PR:P62835"/>
<dbReference type="Proteomes" id="UP000000589">
    <property type="component" value="Chromosome 3"/>
</dbReference>
<dbReference type="RNAct" id="P62835">
    <property type="molecule type" value="protein"/>
</dbReference>
<dbReference type="Bgee" id="ENSMUSG00000068798">
    <property type="expression patterns" value="Expressed in embryonic post-anal tail and 119 other cell types or tissues"/>
</dbReference>
<dbReference type="ExpressionAtlas" id="P62835">
    <property type="expression patterns" value="baseline and differential"/>
</dbReference>
<dbReference type="GO" id="GO:0070161">
    <property type="term" value="C:anchoring junction"/>
    <property type="evidence" value="ECO:0007669"/>
    <property type="project" value="UniProtKB-SubCell"/>
</dbReference>
<dbReference type="GO" id="GO:0030054">
    <property type="term" value="C:cell junction"/>
    <property type="evidence" value="ECO:0000314"/>
    <property type="project" value="UniProtKB"/>
</dbReference>
<dbReference type="GO" id="GO:0005737">
    <property type="term" value="C:cytoplasm"/>
    <property type="evidence" value="ECO:0000314"/>
    <property type="project" value="MGI"/>
</dbReference>
<dbReference type="GO" id="GO:0005769">
    <property type="term" value="C:early endosome"/>
    <property type="evidence" value="ECO:0000250"/>
    <property type="project" value="UniProtKB"/>
</dbReference>
<dbReference type="GO" id="GO:0098978">
    <property type="term" value="C:glutamatergic synapse"/>
    <property type="evidence" value="ECO:0007669"/>
    <property type="project" value="Ensembl"/>
</dbReference>
<dbReference type="GO" id="GO:0032045">
    <property type="term" value="C:guanyl-nucleotide exchange factor complex"/>
    <property type="evidence" value="ECO:0000314"/>
    <property type="project" value="MGI"/>
</dbReference>
<dbReference type="GO" id="GO:0005770">
    <property type="term" value="C:late endosome"/>
    <property type="evidence" value="ECO:0000250"/>
    <property type="project" value="UniProtKB"/>
</dbReference>
<dbReference type="GO" id="GO:0043209">
    <property type="term" value="C:myelin sheath"/>
    <property type="evidence" value="ECO:0007005"/>
    <property type="project" value="UniProtKB"/>
</dbReference>
<dbReference type="GO" id="GO:0043005">
    <property type="term" value="C:neuron projection"/>
    <property type="evidence" value="ECO:0000314"/>
    <property type="project" value="MGI"/>
</dbReference>
<dbReference type="GO" id="GO:0048471">
    <property type="term" value="C:perinuclear region of cytoplasm"/>
    <property type="evidence" value="ECO:0000250"/>
    <property type="project" value="UniProtKB"/>
</dbReference>
<dbReference type="GO" id="GO:0045335">
    <property type="term" value="C:phagocytic vesicle"/>
    <property type="evidence" value="ECO:0007669"/>
    <property type="project" value="Ensembl"/>
</dbReference>
<dbReference type="GO" id="GO:0005886">
    <property type="term" value="C:plasma membrane"/>
    <property type="evidence" value="ECO:0000314"/>
    <property type="project" value="MGI"/>
</dbReference>
<dbReference type="GO" id="GO:0098793">
    <property type="term" value="C:presynapse"/>
    <property type="evidence" value="ECO:0007669"/>
    <property type="project" value="GOC"/>
</dbReference>
<dbReference type="GO" id="GO:0097225">
    <property type="term" value="C:sperm midpiece"/>
    <property type="evidence" value="ECO:0000314"/>
    <property type="project" value="UniProtKB"/>
</dbReference>
<dbReference type="GO" id="GO:0003925">
    <property type="term" value="F:G protein activity"/>
    <property type="evidence" value="ECO:0007669"/>
    <property type="project" value="UniProtKB-EC"/>
</dbReference>
<dbReference type="GO" id="GO:0005525">
    <property type="term" value="F:GTP binding"/>
    <property type="evidence" value="ECO:0007669"/>
    <property type="project" value="UniProtKB-KW"/>
</dbReference>
<dbReference type="GO" id="GO:0003924">
    <property type="term" value="F:GTPase activity"/>
    <property type="evidence" value="ECO:0000314"/>
    <property type="project" value="MGI"/>
</dbReference>
<dbReference type="GO" id="GO:0005085">
    <property type="term" value="F:guanyl-nucleotide exchange factor activity"/>
    <property type="evidence" value="ECO:0000250"/>
    <property type="project" value="UniProtKB"/>
</dbReference>
<dbReference type="GO" id="GO:0044877">
    <property type="term" value="F:protein-containing complex binding"/>
    <property type="evidence" value="ECO:0000266"/>
    <property type="project" value="MGI"/>
</dbReference>
<dbReference type="GO" id="GO:0031267">
    <property type="term" value="F:small GTPase binding"/>
    <property type="evidence" value="ECO:0000353"/>
    <property type="project" value="MGI"/>
</dbReference>
<dbReference type="GO" id="GO:0071320">
    <property type="term" value="P:cellular response to cAMP"/>
    <property type="evidence" value="ECO:0000250"/>
    <property type="project" value="UniProtKB"/>
</dbReference>
<dbReference type="GO" id="GO:1990090">
    <property type="term" value="P:cellular response to nerve growth factor stimulus"/>
    <property type="evidence" value="ECO:0000250"/>
    <property type="project" value="UniProtKB"/>
</dbReference>
<dbReference type="GO" id="GO:0071466">
    <property type="term" value="P:cellular response to xenobiotic stimulus"/>
    <property type="evidence" value="ECO:0007669"/>
    <property type="project" value="Ensembl"/>
</dbReference>
<dbReference type="GO" id="GO:0061028">
    <property type="term" value="P:establishment of endothelial barrier"/>
    <property type="evidence" value="ECO:0000250"/>
    <property type="project" value="UniProtKB"/>
</dbReference>
<dbReference type="GO" id="GO:0097421">
    <property type="term" value="P:liver regeneration"/>
    <property type="evidence" value="ECO:0007669"/>
    <property type="project" value="Ensembl"/>
</dbReference>
<dbReference type="GO" id="GO:0032966">
    <property type="term" value="P:negative regulation of collagen biosynthetic process"/>
    <property type="evidence" value="ECO:0007669"/>
    <property type="project" value="Ensembl"/>
</dbReference>
<dbReference type="GO" id="GO:2000301">
    <property type="term" value="P:negative regulation of synaptic vesicle exocytosis"/>
    <property type="evidence" value="ECO:0000316"/>
    <property type="project" value="MGI"/>
</dbReference>
<dbReference type="GO" id="GO:0038180">
    <property type="term" value="P:nerve growth factor signaling pathway"/>
    <property type="evidence" value="ECO:0000250"/>
    <property type="project" value="UniProtKB"/>
</dbReference>
<dbReference type="GO" id="GO:0007399">
    <property type="term" value="P:nervous system development"/>
    <property type="evidence" value="ECO:0007669"/>
    <property type="project" value="UniProtKB-KW"/>
</dbReference>
<dbReference type="GO" id="GO:0046326">
    <property type="term" value="P:positive regulation of D-glucose import"/>
    <property type="evidence" value="ECO:0007669"/>
    <property type="project" value="Ensembl"/>
</dbReference>
<dbReference type="GO" id="GO:0070374">
    <property type="term" value="P:positive regulation of ERK1 and ERK2 cascade"/>
    <property type="evidence" value="ECO:0000316"/>
    <property type="project" value="MGI"/>
</dbReference>
<dbReference type="GO" id="GO:0060369">
    <property type="term" value="P:positive regulation of Fc receptor mediated stimulatory signaling pathway"/>
    <property type="evidence" value="ECO:0007669"/>
    <property type="project" value="Ensembl"/>
</dbReference>
<dbReference type="GO" id="GO:0043547">
    <property type="term" value="P:positive regulation of GTPase activity"/>
    <property type="evidence" value="ECO:0000250"/>
    <property type="project" value="UniProtKB"/>
</dbReference>
<dbReference type="GO" id="GO:0010976">
    <property type="term" value="P:positive regulation of neuron projection development"/>
    <property type="evidence" value="ECO:0000314"/>
    <property type="project" value="MGI"/>
</dbReference>
<dbReference type="GO" id="GO:0050766">
    <property type="term" value="P:positive regulation of phagocytosis"/>
    <property type="evidence" value="ECO:0007669"/>
    <property type="project" value="Ensembl"/>
</dbReference>
<dbReference type="GO" id="GO:0045860">
    <property type="term" value="P:positive regulation of protein kinase activity"/>
    <property type="evidence" value="ECO:0000250"/>
    <property type="project" value="UniProtKB"/>
</dbReference>
<dbReference type="GO" id="GO:2001214">
    <property type="term" value="P:positive regulation of vasculogenesis"/>
    <property type="evidence" value="ECO:0000315"/>
    <property type="project" value="UniProtKB"/>
</dbReference>
<dbReference type="GO" id="GO:0072659">
    <property type="term" value="P:protein localization to plasma membrane"/>
    <property type="evidence" value="ECO:0000250"/>
    <property type="project" value="UniProtKB"/>
</dbReference>
<dbReference type="GO" id="GO:0032486">
    <property type="term" value="P:Rap protein signal transduction"/>
    <property type="evidence" value="ECO:0000250"/>
    <property type="project" value="UniProtKB"/>
</dbReference>
<dbReference type="GO" id="GO:1901888">
    <property type="term" value="P:regulation of cell junction assembly"/>
    <property type="evidence" value="ECO:0000250"/>
    <property type="project" value="UniProtKB"/>
</dbReference>
<dbReference type="GO" id="GO:0098696">
    <property type="term" value="P:regulation of neurotransmitter receptor localization to postsynaptic specialization membrane"/>
    <property type="evidence" value="ECO:0007669"/>
    <property type="project" value="Ensembl"/>
</dbReference>
<dbReference type="GO" id="GO:0097327">
    <property type="term" value="P:response to antineoplastic agent"/>
    <property type="evidence" value="ECO:0007669"/>
    <property type="project" value="Ensembl"/>
</dbReference>
<dbReference type="GO" id="GO:0009743">
    <property type="term" value="P:response to carbohydrate"/>
    <property type="evidence" value="ECO:0007669"/>
    <property type="project" value="Ensembl"/>
</dbReference>
<dbReference type="GO" id="GO:0007264">
    <property type="term" value="P:small GTPase-mediated signal transduction"/>
    <property type="evidence" value="ECO:0000314"/>
    <property type="project" value="MGI"/>
</dbReference>
<dbReference type="GO" id="GO:0016079">
    <property type="term" value="P:synaptic vesicle exocytosis"/>
    <property type="evidence" value="ECO:0000316"/>
    <property type="project" value="MGI"/>
</dbReference>
<dbReference type="CDD" id="cd04175">
    <property type="entry name" value="Rap1"/>
    <property type="match status" value="1"/>
</dbReference>
<dbReference type="FunFam" id="3.40.50.300:FF:000182">
    <property type="entry name" value="ras-related protein Rap-1b"/>
    <property type="match status" value="1"/>
</dbReference>
<dbReference type="Gene3D" id="3.40.50.300">
    <property type="entry name" value="P-loop containing nucleotide triphosphate hydrolases"/>
    <property type="match status" value="1"/>
</dbReference>
<dbReference type="InterPro" id="IPR027417">
    <property type="entry name" value="P-loop_NTPase"/>
</dbReference>
<dbReference type="InterPro" id="IPR038851">
    <property type="entry name" value="Rap1"/>
</dbReference>
<dbReference type="InterPro" id="IPR005225">
    <property type="entry name" value="Small_GTP-bd"/>
</dbReference>
<dbReference type="InterPro" id="IPR001806">
    <property type="entry name" value="Small_GTPase"/>
</dbReference>
<dbReference type="InterPro" id="IPR020849">
    <property type="entry name" value="Small_GTPase_Ras-type"/>
</dbReference>
<dbReference type="NCBIfam" id="TIGR00231">
    <property type="entry name" value="small_GTP"/>
    <property type="match status" value="1"/>
</dbReference>
<dbReference type="PANTHER" id="PTHR24070">
    <property type="entry name" value="RAS, DI-RAS, AND RHEB FAMILY MEMBERS OF SMALL GTPASE SUPERFAMILY"/>
    <property type="match status" value="1"/>
</dbReference>
<dbReference type="Pfam" id="PF00071">
    <property type="entry name" value="Ras"/>
    <property type="match status" value="1"/>
</dbReference>
<dbReference type="PRINTS" id="PR00449">
    <property type="entry name" value="RASTRNSFRMNG"/>
</dbReference>
<dbReference type="SMART" id="SM00175">
    <property type="entry name" value="RAB"/>
    <property type="match status" value="1"/>
</dbReference>
<dbReference type="SMART" id="SM00176">
    <property type="entry name" value="RAN"/>
    <property type="match status" value="1"/>
</dbReference>
<dbReference type="SMART" id="SM00173">
    <property type="entry name" value="RAS"/>
    <property type="match status" value="1"/>
</dbReference>
<dbReference type="SMART" id="SM00174">
    <property type="entry name" value="RHO"/>
    <property type="match status" value="1"/>
</dbReference>
<dbReference type="SUPFAM" id="SSF52540">
    <property type="entry name" value="P-loop containing nucleoside triphosphate hydrolases"/>
    <property type="match status" value="1"/>
</dbReference>
<dbReference type="PROSITE" id="PS51421">
    <property type="entry name" value="RAS"/>
    <property type="match status" value="1"/>
</dbReference>
<gene>
    <name type="primary">Rap1a</name>
    <name type="synonym">Krev-1</name>
</gene>
<comment type="function">
    <text evidence="3 4">Counteracts the mitogenic function of Ras, at least partly because it can interact with Ras GAPs and RAF in a competitive manner. Together with ITGB1BP1, regulates KRIT1 localization to microtubules and membranes (By similarity). Plays a role in nerve growth factor (NGF)-induced neurite outgrowth. Plays a role in the regulation of embryonic blood vessel formation. Involved in the establishment of basal endothelial barrier function. Facilitates the progressive accumulation of CDH1 at mature desmosome junctions via cAMP-dependent signaling and its interaction with PKP3 (By similarity). May be involved in the regulation of the vascular endothelial growth factor receptor KDR expression at endothelial cell-cell junctions.</text>
</comment>
<comment type="catalytic activity">
    <reaction evidence="2">
        <text>GTP + H2O = GDP + phosphate + H(+)</text>
        <dbReference type="Rhea" id="RHEA:19669"/>
        <dbReference type="ChEBI" id="CHEBI:15377"/>
        <dbReference type="ChEBI" id="CHEBI:15378"/>
        <dbReference type="ChEBI" id="CHEBI:37565"/>
        <dbReference type="ChEBI" id="CHEBI:43474"/>
        <dbReference type="ChEBI" id="CHEBI:58189"/>
        <dbReference type="EC" id="3.6.5.2"/>
    </reaction>
</comment>
<comment type="activity regulation">
    <text evidence="1">Activated by guanine nucleotide-exchange factors (GEF) EPAC and EPAC2 in a cAMP-dependent manner, and GFR.</text>
</comment>
<comment type="subunit">
    <text evidence="3 5">Found in a complex, at least composed of ITGB1BP1, KRIT1 and RAP1A. Interacts (active GTP-bound form preferentially) with KRIT1 (via C-terminus FERM domain); the interaction does not induce the opening conformation of KRIT1. Found in a complex composed of CDH1, RAP1A and PKP3; PKP3 acts as a scaffold protein within the complex, the complex is required for CDH1 localization to mature desmosome cell junctions (By similarity). In its GTP-bound form interacts with PLCE1 and RADIL. Interacts with SGSM1, SGSM2 and SGSM3. Interacts (via GTP-bound active form) with RAPGEF2 (via Ras-associating domain) (By similarity). Interacts with TBC1D21 (PubMed:30360518). Interacts with RAP1GDS1 (By similarity).</text>
</comment>
<comment type="subcellular location">
    <subcellularLocation>
        <location evidence="1">Cell membrane</location>
        <topology evidence="1">Lipid-anchor</topology>
    </subcellularLocation>
    <subcellularLocation>
        <location evidence="4">Cell junction</location>
    </subcellularLocation>
    <subcellularLocation>
        <location evidence="1">Cytoplasm</location>
    </subcellularLocation>
    <subcellularLocation>
        <location evidence="1">Cytoplasm</location>
        <location evidence="1">Perinuclear region</location>
    </subcellularLocation>
    <subcellularLocation>
        <location evidence="1">Early endosome</location>
    </subcellularLocation>
    <subcellularLocation>
        <location evidence="1">Late endosome</location>
    </subcellularLocation>
    <text evidence="1">Recruited from early endosome to late endosome compartment after nerve growth factor (NGF) stimulation. Colocalized with RAPGEF2 in the perinuclear region (By similarity). Localized with RAPGEF2 at cell-cell junctions.</text>
</comment>
<comment type="tissue specificity">
    <text evidence="5">Expressed in the testis and sperm midpiece (at protein level).</text>
</comment>
<comment type="similarity">
    <text evidence="6">Belongs to the small GTPase superfamily. Ras family.</text>
</comment>
<protein>
    <recommendedName>
        <fullName>Ras-related protein Rap-1A</fullName>
        <ecNumber evidence="2">3.6.5.2</ecNumber>
    </recommendedName>
    <alternativeName>
        <fullName>Ras-related protein Krev-1</fullName>
    </alternativeName>
</protein>
<reference key="1">
    <citation type="journal article" date="2004" name="Genome Res.">
        <title>The status, quality, and expansion of the NIH full-length cDNA project: the Mammalian Gene Collection (MGC).</title>
        <authorList>
            <consortium name="The MGC Project Team"/>
        </authorList>
    </citation>
    <scope>NUCLEOTIDE SEQUENCE [LARGE SCALE MRNA]</scope>
    <source>
        <strain>Czech II</strain>
        <tissue>Mammary tumor</tissue>
    </source>
</reference>
<reference key="2">
    <citation type="journal article" date="2009" name="Biochem. Biophys. Res. Commun.">
        <title>Impaired vascular development in the yolk sac and allantois in mice lacking RA-GEF-1.</title>
        <authorList>
            <person name="Kanemura H."/>
            <person name="Satoh T."/>
            <person name="Bilasy S.E."/>
            <person name="Ueda S."/>
            <person name="Hirashima M."/>
            <person name="Kataoka T."/>
        </authorList>
    </citation>
    <scope>FUNCTION</scope>
    <scope>SUBCELLULAR LOCATION</scope>
</reference>
<reference key="3">
    <citation type="journal article" date="2010" name="Cell">
        <title>A tissue-specific atlas of mouse protein phosphorylation and expression.</title>
        <authorList>
            <person name="Huttlin E.L."/>
            <person name="Jedrychowski M.P."/>
            <person name="Elias J.E."/>
            <person name="Goswami T."/>
            <person name="Rad R."/>
            <person name="Beausoleil S.A."/>
            <person name="Villen J."/>
            <person name="Haas W."/>
            <person name="Sowa M.E."/>
            <person name="Gygi S.P."/>
        </authorList>
    </citation>
    <scope>IDENTIFICATION BY MASS SPECTROMETRY [LARGE SCALE ANALYSIS]</scope>
    <source>
        <tissue>Brain</tissue>
        <tissue>Brown adipose tissue</tissue>
        <tissue>Heart</tissue>
        <tissue>Kidney</tissue>
        <tissue>Liver</tissue>
        <tissue>Lung</tissue>
        <tissue>Pancreas</tissue>
        <tissue>Spleen</tissue>
        <tissue>Testis</tissue>
    </source>
</reference>
<reference key="4">
    <citation type="journal article" date="2018" name="Int. J. Mol. Sci.">
        <title>TBC1D21 Potentially Interacts with and Regulates Rap1 during Murine Spermatogenesis.</title>
        <authorList>
            <person name="Ke C.C."/>
            <person name="Lin Y.H."/>
            <person name="Wang Y.Y."/>
            <person name="Wu Y.Y."/>
            <person name="Chen M.F."/>
            <person name="Ku W.C."/>
            <person name="Chiang H.S."/>
            <person name="Lai T.H."/>
        </authorList>
    </citation>
    <scope>INTERACTION WITH TBC1D21</scope>
    <scope>TISSUE SPECIFICITY</scope>
</reference>